<comment type="function">
    <text evidence="1 3">Component of antiviral defense system Zorya type II, composed of ZorA, ZorB and ZorE. Expression of Zorya type II in E.coli (strain MG1655) confers resistance to phages SECphi7 and T7. While most T7 infected Zorya-containing cells undergo abortive infection, a minority produce viable phage progeny. These eventually accumulate to a high multiplicity of infection, leading to culture collapse by 170 minutes after initial infection (PubMed:29371424). ZorA and ZorB probably assemble in the cell inner membrane and exert their effect there. This may be a nuclease (Probable).</text>
</comment>
<keyword id="KW-0051">Antiviral defense</keyword>
<accession>P0DW03</accession>
<dbReference type="EMBL" id="CP000946">
    <property type="protein sequence ID" value="ACA79492.1"/>
    <property type="molecule type" value="Genomic_DNA"/>
</dbReference>
<dbReference type="RefSeq" id="WP_000777276.1">
    <property type="nucleotide sequence ID" value="NZ_MTFT01000019.1"/>
</dbReference>
<dbReference type="KEGG" id="ecl:EcolC_3890"/>
<dbReference type="GO" id="GO:0051607">
    <property type="term" value="P:defense response to virus"/>
    <property type="evidence" value="ECO:0007669"/>
    <property type="project" value="UniProtKB-KW"/>
</dbReference>
<dbReference type="CDD" id="cd00085">
    <property type="entry name" value="HNHc"/>
    <property type="match status" value="1"/>
</dbReference>
<dbReference type="InterPro" id="IPR003615">
    <property type="entry name" value="HNH_nuc"/>
</dbReference>
<dbReference type="InterPro" id="IPR049662">
    <property type="entry name" value="ZorE-like_t2"/>
</dbReference>
<dbReference type="NCBIfam" id="NF041791">
    <property type="entry name" value="anti-phage_ZorE"/>
    <property type="match status" value="1"/>
</dbReference>
<evidence type="ECO:0000269" key="1">
    <source>
    </source>
</evidence>
<evidence type="ECO:0000303" key="2">
    <source>
    </source>
</evidence>
<evidence type="ECO:0000305" key="3">
    <source>
    </source>
</evidence>
<evidence type="ECO:0000312" key="4">
    <source>
        <dbReference type="EMBL" id="ACA79492.1"/>
    </source>
</evidence>
<organism>
    <name type="scientific">Escherichia coli (strain ATCC 8739 / DSM 1576 / NBRC 3972 / NCIMB 8545 / WDCM 00012 / Crooks)</name>
    <dbReference type="NCBI Taxonomy" id="481805"/>
    <lineage>
        <taxon>Bacteria</taxon>
        <taxon>Pseudomonadati</taxon>
        <taxon>Pseudomonadota</taxon>
        <taxon>Gammaproteobacteria</taxon>
        <taxon>Enterobacterales</taxon>
        <taxon>Enterobacteriaceae</taxon>
        <taxon>Escherichia</taxon>
    </lineage>
</organism>
<proteinExistence type="predicted"/>
<protein>
    <recommendedName>
        <fullName evidence="2">Zorya protein ZorE</fullName>
    </recommendedName>
    <alternativeName>
        <fullName evidence="2">Putative nuclease ZorE</fullName>
    </alternativeName>
</protein>
<reference evidence="4" key="1">
    <citation type="submission" date="2008-02" db="EMBL/GenBank/DDBJ databases">
        <title>Complete sequence of Escherichia coli C str. ATCC 8739.</title>
        <authorList>
            <person name="Copeland A."/>
            <person name="Lucas S."/>
            <person name="Lapidus A."/>
            <person name="Glavina del Rio T."/>
            <person name="Dalin E."/>
            <person name="Tice H."/>
            <person name="Bruce D."/>
            <person name="Goodwin L."/>
            <person name="Pitluck S."/>
            <person name="Kiss H."/>
            <person name="Brettin T."/>
            <person name="Detter J.C."/>
            <person name="Han C."/>
            <person name="Kuske C.R."/>
            <person name="Schmutz J."/>
            <person name="Larimer F."/>
            <person name="Land M."/>
            <person name="Hauser L."/>
            <person name="Kyrpides N."/>
            <person name="Mikhailova N."/>
            <person name="Ingram L."/>
            <person name="Richardson P."/>
        </authorList>
    </citation>
    <scope>NUCLEOTIDE SEQUENCE [LARGE SCALE GENOMIC DNA]</scope>
    <source>
        <strain>ATCC 8739 / DSM 1576 / NBRC 3972 / NCIMB 8545 / WDCM 00012 / Crooks</strain>
    </source>
</reference>
<reference key="2">
    <citation type="journal article" date="2018" name="Science">
        <title>Systematic discovery of antiphage defense systems in the microbial pangenome.</title>
        <authorList>
            <person name="Doron S."/>
            <person name="Melamed S."/>
            <person name="Ofir G."/>
            <person name="Leavitt A."/>
            <person name="Lopatina A."/>
            <person name="Keren M."/>
            <person name="Amitai G."/>
            <person name="Sorek R."/>
        </authorList>
    </citation>
    <scope>FUNCTION</scope>
    <source>
        <strain>ATCC 8739 / DSM 1576 / NBRC 3972 / NCIMB 8545 / WDCM 00012 / Crooks</strain>
    </source>
</reference>
<gene>
    <name evidence="2" type="primary">zorE</name>
    <name evidence="4" type="ordered locus">EcolC_3890</name>
</gene>
<feature type="chain" id="PRO_0000456343" description="Zorya protein ZorE">
    <location>
        <begin position="1"/>
        <end position="367"/>
    </location>
</feature>
<sequence>MKLSIDISELIQLGKKMLPEGVDFFLDESPIDFDPIDIELSTGKEVSIEDLDPGSGLISYHGRQVLLYIRDHSGRYDAAIVDGEKGKRFHIAWCRTLDEMRHKNRFERYHATNRIDGLFEIDDGSGRSQDVDLRVCMNCLERLNYKGSIDKQRKREIFKSFSLNEFFSDYSTCFRHMPKGIYDKTNSGYVENWKEISKEIREKANYVCNDCGVNLSTAKNLCHVHHKNGIKYDNHHENLLVLCKDCHRKQPLHEGIFVTQAEMAIIQRLRSQQGLLKAESWNEIYDLTDPSVHGDINMMQHKGFQPPVPGLDLQNSEHEIIATVEAAWPGLKIAVNLTPAEVEGWRIYTVGELVKEIQTGAFTPAKL</sequence>
<name>ZORE_ECOLC</name>